<sequence>MSQLWVLYETYCQLFSLTNEEKVIVIGNQLEHHVTVSSFSFRNGYIQIEKKSDGSTLAVLQGGRQIGELKPRCSITIDVDGQQMTIAWSGEEQRKYVYYVGQQSEVLVSNDPQADIETTNARFSLRKHRGQWVVIPDDDAPLFLNGVQLSDAVSLRNGDVLLCPYMQFVFIEEDLLAVTSSEEVVSSLTETMPPLSEMKKKYPMYRRTPRMIYELPSDKVSISFPSQEGDGDPRGLWLMVLPPVMMLLVIGAVALIQPRGVFIMISIAMFATTIVTSTAQYMREKKARQMRKEKRRRIYTNYLEQKREELQALSEKQRNVLYYHFPSFEQMKSFVMQVNSRIWERTAESADFLHVRIGTADVPATYEVSVSMGDLANREIDDLLEQAQHIAKVYQTVKHVPLPIDVSHGAIGMVGKRSIVNGEIEQLVGQIAFFHSYHDVRFVAIFSEDDYKHWEWMKWLPHFQLPNSFAKGLIYNEQTRDQLLSSIYEMLRERALDEEKDKKRFSPHFVFIVADRSLIAEHVILEYLEEKNEDIGISVIFASETKESLTENVHTLVQYINEREGEIVIQHRKAAHIPFQLDEHSTEGNESFARMLRSLNHQKGMSNSIPEKVTFLEMMQTRRANELQIVQNWLSCQTSRSLAVPIGLKGRNDVVELNLHEKAHGPHGLVAGTTGSGKSELLQTYILSLAVHFHPHEVAFLIIDYKGGGMAQPFKNMPHLLGTITNIHGSKNFSARALASINSELKKRQRLFDRYEVNHINDYMELYKQGKAEQPLPHLFLIADEFAELKSEEPDFIRELVSAARIGRSLGVHLILATQKPRGVIDEQIWSNARFRISLKMQDVNDSKEILRNGDAAAITVPGRAYLQVGNNEVYELFQSAWSGAPYVEEGVEAEDEIHIVTDLGLVPVSNVATDRKRSRQKPKTEIEMVVEQIIETQKQLNIEKLPSPWLPPLPPRLARPASVTAEANAFPIGLKDEPELQSQSDYFYQWLEDGNIGIFGSAGYGKSTTMMTLLLSFAGAYNPAQLHYYIFDFGNSALLPLRQLPHTADYFRLDDEKKIEKFIKFMKEEMEQRKQRFMEKEVSTIKLYNALSEEKLPIIIVALDNFDVVKEEMPDFETQLIQYARDGQSLGIFFIMTATRVSGIRPPLMNNLKTKIVHYFIDSSEKFSLIGRTPYDVDPIPGRALIKKDNAALTQIYLPADGEDDIEVLENVKREMERLKEVYQHIPKPKPIPMLPPRLSMSVFTNTYVQHRASGFIPVGLDEQTVRPVAINMRTDPHCLIVGQSRKGKTNVVKVILESLLVQEPESIGLLDGIDRGLAGYANRDDITYIEAKERLAQWLNEADAVLQQREREYIQAVNENRATTLAWPPVVFVVDSLLRLQQETDSIMQGRIANMMKQYSHLGFHVFVAGNANEFVKGFDALTAELKQIRQAILVTKKSEQSLFALPFTRNEQEIEPGFGYFVVGGKDQKIQIPKVE</sequence>
<organism>
    <name type="scientific">Geobacillus thermodenitrificans (strain NG80-2)</name>
    <dbReference type="NCBI Taxonomy" id="420246"/>
    <lineage>
        <taxon>Bacteria</taxon>
        <taxon>Bacillati</taxon>
        <taxon>Bacillota</taxon>
        <taxon>Bacilli</taxon>
        <taxon>Bacillales</taxon>
        <taxon>Anoxybacillaceae</taxon>
        <taxon>Geobacillus</taxon>
    </lineage>
</organism>
<reference key="1">
    <citation type="journal article" date="2007" name="Proc. Natl. Acad. Sci. U.S.A.">
        <title>Genome and proteome of long-chain alkane degrading Geobacillus thermodenitrificans NG80-2 isolated from a deep-subsurface oil reservoir.</title>
        <authorList>
            <person name="Feng L."/>
            <person name="Wang W."/>
            <person name="Cheng J."/>
            <person name="Ren Y."/>
            <person name="Zhao G."/>
            <person name="Gao C."/>
            <person name="Tang Y."/>
            <person name="Liu X."/>
            <person name="Han W."/>
            <person name="Peng X."/>
            <person name="Liu R."/>
            <person name="Wang L."/>
        </authorList>
    </citation>
    <scope>NUCLEOTIDE SEQUENCE [LARGE SCALE GENOMIC DNA]</scope>
    <source>
        <strain>NG80-2</strain>
    </source>
</reference>
<reference evidence="13" key="2">
    <citation type="journal article" date="2015" name="Cell">
        <title>Substrates control multimerization and activation of the multi-domain ATPase motor of type VII secretion.</title>
        <authorList>
            <person name="Rosenberg O.S."/>
            <person name="Dovala D."/>
            <person name="Li X."/>
            <person name="Connolly L."/>
            <person name="Bendebury A."/>
            <person name="Finer-Moore J."/>
            <person name="Holton J."/>
            <person name="Cheng Y."/>
            <person name="Stroud R.M."/>
            <person name="Cox J.S."/>
        </authorList>
    </citation>
    <scope>X-RAY CRYSTALLOGRAPHY (2.45 ANGSTROMS) OF 921-1479 IN COMPLEX WITH 2 ATP</scope>
    <scope>ELECTRON MICROSCOPY</scope>
    <scope>POSSIBLE FUNCTION</scope>
    <scope>DOMAIN</scope>
    <scope>PROBABLE TOPOLOGY</scope>
    <source>
        <strain>W9A21 / NM16-2</strain>
    </source>
</reference>
<reference evidence="14 15" key="3">
    <citation type="journal article" date="2016" name="Biochem. J.">
        <title>EssC: domain structures inform on the elusive translocation channel in the Type VII secretion system.</title>
        <authorList>
            <person name="Zoltner M."/>
            <person name="Ng W.M."/>
            <person name="Money J.J."/>
            <person name="Fyfe P.K."/>
            <person name="Kneuper H."/>
            <person name="Palmer T."/>
            <person name="Hunter W.N."/>
        </authorList>
    </citation>
    <scope>X-RAY CRYSTALLOGRAPHY (2.06 ANGSTROMS) OF 1-196</scope>
    <scope>X-RAY CRYSTALLOGRAPHY (2.91 ANGSTROMS) OF 966-1479 IN COMPLEX WITH 1 ATP</scope>
    <scope>POSSIBLE FUNCTION</scope>
    <scope>SUBUNIT</scope>
    <scope>ATP-BINDING</scope>
    <source>
        <strain>NG80-2</strain>
    </source>
</reference>
<comment type="function">
    <text evidence="2 3 11 12">Part of the ESX specialized secretion system, which exports proteins from the cell including EsxA (ESAT-6) and EsxB (CFP-10) (By similarity). Might be the translocase subunit (PubMed:25865481). Probably only the first FtsK domain can hydrolyze ATP (PubMed:27130157).</text>
</comment>
<comment type="activity regulation">
    <text evidence="1">EsxB binding to the third FtsK domain causes multimerization; a subsequent unknown step relieves the allosteric inhibition of linker 2 on FtsK domain 1, activating the ATPase activity (By similarity).</text>
</comment>
<comment type="subunit">
    <text evidence="2 3 7">Whole protein oligomerizes in native gels (PubMed:27130157). Part of the ESX / type VII secretion system (T7SS), which is composed of cytosolic and membrane components. The ESX membrane complex is composed of EccB, EccC and EccD (By similarity).</text>
</comment>
<comment type="subcellular location">
    <subcellularLocation>
        <location evidence="4">Cell membrane</location>
        <topology evidence="4">Multi-pass membrane protein</topology>
    </subcellularLocation>
</comment>
<comment type="domain">
    <text>The cytoplasmic domain is a rigid structure with 4 domains (residues 480 to 599 form an unnamed domain) plus the 3 FtsK (ATPase) domains which are connected by short linkers (PubMed:25865481).</text>
</comment>
<comment type="miscellaneous">
    <text evidence="11">Unlike the well characterized M.tuberculosis ESX-1 cluster, this protein is not split into 2 genes. This subunit and a WGX100 family protein are the only proteins universally associated with T7SS.</text>
</comment>
<feature type="chain" id="PRO_0000438308" description="ESX secretion system protein EccC">
    <location>
        <begin position="1"/>
        <end position="1479"/>
    </location>
</feature>
<feature type="topological domain" description="Cytoplasmic" evidence="10">
    <location>
        <begin position="1"/>
        <end position="235"/>
    </location>
</feature>
<feature type="transmembrane region" description="Helical" evidence="4">
    <location>
        <begin position="236"/>
        <end position="256"/>
    </location>
</feature>
<feature type="topological domain" description="Extracellular" evidence="10">
    <location>
        <begin position="257"/>
        <end position="259"/>
    </location>
</feature>
<feature type="transmembrane region" description="Helical" evidence="4">
    <location>
        <begin position="260"/>
        <end position="280"/>
    </location>
</feature>
<feature type="topological domain" description="Cytoplasmic" evidence="11">
    <location>
        <begin position="281"/>
        <end position="1479"/>
    </location>
</feature>
<feature type="domain" description="FtsK 1" evidence="5">
    <location>
        <begin position="652"/>
        <end position="848"/>
    </location>
</feature>
<feature type="domain" description="FtsK 2" evidence="5">
    <location>
        <begin position="984"/>
        <end position="1168"/>
    </location>
</feature>
<feature type="domain" description="FtsK 3" evidence="5">
    <location>
        <begin position="1267"/>
        <end position="1444"/>
    </location>
</feature>
<feature type="coiled-coil region" evidence="4">
    <location>
        <begin position="291"/>
        <end position="321"/>
    </location>
</feature>
<feature type="active site" evidence="11">
    <location>
        <position position="785"/>
    </location>
</feature>
<feature type="binding site" evidence="5">
    <location>
        <begin position="672"/>
        <end position="679"/>
    </location>
    <ligand>
        <name>ATP</name>
        <dbReference type="ChEBI" id="CHEBI:30616"/>
        <label>1</label>
    </ligand>
</feature>
<feature type="binding site" evidence="5 6 7 13 14">
    <location>
        <begin position="1004"/>
        <end position="1009"/>
    </location>
    <ligand>
        <name>ATP</name>
        <dbReference type="ChEBI" id="CHEBI:30616"/>
        <label>2</label>
    </ligand>
</feature>
<feature type="binding site" evidence="7 14">
    <location>
        <position position="1036"/>
    </location>
    <ligand>
        <name>ATP</name>
        <dbReference type="ChEBI" id="CHEBI:30616"/>
        <label>2</label>
    </ligand>
</feature>
<feature type="binding site" evidence="7 14">
    <location>
        <position position="1105"/>
    </location>
    <ligand>
        <name>ATP</name>
        <dbReference type="ChEBI" id="CHEBI:30616"/>
        <label>2</label>
    </ligand>
</feature>
<feature type="binding site" evidence="7 13 14">
    <location>
        <position position="1197"/>
    </location>
    <ligand>
        <name>ATP</name>
        <dbReference type="ChEBI" id="CHEBI:30616"/>
        <label>2</label>
    </ligand>
</feature>
<feature type="binding site" evidence="7 13 14">
    <location>
        <position position="1206"/>
    </location>
    <ligand>
        <name>ATP</name>
        <dbReference type="ChEBI" id="CHEBI:30616"/>
        <label>2</label>
    </ligand>
</feature>
<feature type="binding site" evidence="5 13">
    <location>
        <begin position="1287"/>
        <end position="1291"/>
    </location>
    <ligand>
        <name>ATP</name>
        <dbReference type="ChEBI" id="CHEBI:30616"/>
        <label>3</label>
    </ligand>
</feature>
<feature type="binding site" evidence="13">
    <location>
        <position position="1475"/>
    </location>
    <ligand>
        <name>ATP</name>
        <dbReference type="ChEBI" id="CHEBI:30616"/>
        <label>3</label>
    </ligand>
</feature>
<feature type="strand" evidence="18">
    <location>
        <begin position="3"/>
        <end position="8"/>
    </location>
</feature>
<feature type="strand" evidence="18">
    <location>
        <begin position="11"/>
        <end position="16"/>
    </location>
</feature>
<feature type="strand" evidence="18">
    <location>
        <begin position="23"/>
        <end position="35"/>
    </location>
</feature>
<feature type="strand" evidence="18">
    <location>
        <begin position="46"/>
        <end position="50"/>
    </location>
</feature>
<feature type="strand" evidence="18">
    <location>
        <begin position="57"/>
        <end position="69"/>
    </location>
</feature>
<feature type="strand" evidence="18">
    <location>
        <begin position="73"/>
        <end position="77"/>
    </location>
</feature>
<feature type="strand" evidence="18">
    <location>
        <begin position="84"/>
        <end position="88"/>
    </location>
</feature>
<feature type="strand" evidence="18">
    <location>
        <begin position="94"/>
        <end position="99"/>
    </location>
</feature>
<feature type="strand" evidence="18">
    <location>
        <begin position="104"/>
        <end position="111"/>
    </location>
</feature>
<feature type="strand" evidence="18">
    <location>
        <begin position="115"/>
        <end position="117"/>
    </location>
</feature>
<feature type="strand" evidence="18">
    <location>
        <begin position="123"/>
        <end position="128"/>
    </location>
</feature>
<feature type="strand" evidence="18">
    <location>
        <begin position="131"/>
        <end position="136"/>
    </location>
</feature>
<feature type="strand" evidence="18">
    <location>
        <begin position="138"/>
        <end position="140"/>
    </location>
</feature>
<feature type="strand" evidence="18">
    <location>
        <begin position="161"/>
        <end position="163"/>
    </location>
</feature>
<feature type="strand" evidence="18">
    <location>
        <begin position="166"/>
        <end position="172"/>
    </location>
</feature>
<feature type="strand" evidence="18">
    <location>
        <begin position="175"/>
        <end position="182"/>
    </location>
</feature>
<feature type="strand" evidence="18">
    <location>
        <begin position="185"/>
        <end position="192"/>
    </location>
</feature>
<feature type="strand" evidence="16">
    <location>
        <begin position="969"/>
        <end position="978"/>
    </location>
</feature>
<feature type="turn" evidence="16">
    <location>
        <begin position="979"/>
        <end position="982"/>
    </location>
</feature>
<feature type="strand" evidence="16">
    <location>
        <begin position="983"/>
        <end position="990"/>
    </location>
</feature>
<feature type="turn" evidence="16">
    <location>
        <begin position="991"/>
        <end position="994"/>
    </location>
</feature>
<feature type="strand" evidence="16">
    <location>
        <begin position="997"/>
        <end position="1000"/>
    </location>
</feature>
<feature type="helix" evidence="16">
    <location>
        <begin position="1007"/>
        <end position="1021"/>
    </location>
</feature>
<feature type="turn" evidence="16">
    <location>
        <begin position="1024"/>
        <end position="1026"/>
    </location>
</feature>
<feature type="strand" evidence="16">
    <location>
        <begin position="1027"/>
        <end position="1033"/>
    </location>
</feature>
<feature type="strand" evidence="16">
    <location>
        <begin position="1035"/>
        <end position="1037"/>
    </location>
</feature>
<feature type="helix" evidence="16">
    <location>
        <begin position="1041"/>
        <end position="1044"/>
    </location>
</feature>
<feature type="strand" evidence="16">
    <location>
        <begin position="1048"/>
        <end position="1053"/>
    </location>
</feature>
<feature type="helix" evidence="16">
    <location>
        <begin position="1057"/>
        <end position="1080"/>
    </location>
</feature>
<feature type="helix" evidence="16">
    <location>
        <begin position="1086"/>
        <end position="1089"/>
    </location>
</feature>
<feature type="strand" evidence="16">
    <location>
        <begin position="1099"/>
        <end position="1105"/>
    </location>
</feature>
<feature type="helix" evidence="16">
    <location>
        <begin position="1108"/>
        <end position="1113"/>
    </location>
</feature>
<feature type="helix" evidence="16">
    <location>
        <begin position="1115"/>
        <end position="1126"/>
    </location>
</feature>
<feature type="turn" evidence="16">
    <location>
        <begin position="1129"/>
        <end position="1132"/>
    </location>
</feature>
<feature type="strand" evidence="16">
    <location>
        <begin position="1133"/>
        <end position="1140"/>
    </location>
</feature>
<feature type="helix" evidence="16">
    <location>
        <begin position="1147"/>
        <end position="1150"/>
    </location>
</feature>
<feature type="strand" evidence="16">
    <location>
        <begin position="1155"/>
        <end position="1158"/>
    </location>
</feature>
<feature type="helix" evidence="16">
    <location>
        <begin position="1164"/>
        <end position="1170"/>
    </location>
</feature>
<feature type="helix" evidence="17">
    <location>
        <begin position="1175"/>
        <end position="1177"/>
    </location>
</feature>
<feature type="strand" evidence="16">
    <location>
        <begin position="1184"/>
        <end position="1197"/>
    </location>
</feature>
<feature type="strand" evidence="16">
    <location>
        <begin position="1199"/>
        <end position="1201"/>
    </location>
</feature>
<feature type="helix" evidence="16">
    <location>
        <begin position="1206"/>
        <end position="1223"/>
    </location>
</feature>
<feature type="helix" evidence="16">
    <location>
        <begin position="1224"/>
        <end position="1226"/>
    </location>
</feature>
<feature type="helix" evidence="16">
    <location>
        <begin position="1242"/>
        <end position="1248"/>
    </location>
</feature>
<feature type="strand" evidence="16">
    <location>
        <begin position="1257"/>
        <end position="1263"/>
    </location>
</feature>
<feature type="turn" evidence="16">
    <location>
        <begin position="1264"/>
        <end position="1266"/>
    </location>
</feature>
<feature type="strand" evidence="16">
    <location>
        <begin position="1269"/>
        <end position="1273"/>
    </location>
</feature>
<feature type="turn" evidence="16">
    <location>
        <begin position="1274"/>
        <end position="1276"/>
    </location>
</feature>
<feature type="strand" evidence="16">
    <location>
        <begin position="1280"/>
        <end position="1284"/>
    </location>
</feature>
<feature type="helix" evidence="16">
    <location>
        <begin position="1290"/>
        <end position="1300"/>
    </location>
</feature>
<feature type="strand" evidence="16">
    <location>
        <begin position="1301"/>
        <end position="1304"/>
    </location>
</feature>
<feature type="strand" evidence="16">
    <location>
        <begin position="1307"/>
        <end position="1312"/>
    </location>
</feature>
<feature type="helix" evidence="16">
    <location>
        <begin position="1320"/>
        <end position="1322"/>
    </location>
</feature>
<feature type="strand" evidence="16">
    <location>
        <begin position="1326"/>
        <end position="1331"/>
    </location>
</feature>
<feature type="helix" evidence="16">
    <location>
        <begin position="1334"/>
        <end position="1357"/>
    </location>
</feature>
<feature type="strand" evidence="16">
    <location>
        <begin position="1372"/>
        <end position="1377"/>
    </location>
</feature>
<feature type="helix" evidence="16">
    <location>
        <begin position="1379"/>
        <end position="1382"/>
    </location>
</feature>
<feature type="helix" evidence="16">
    <location>
        <begin position="1390"/>
        <end position="1398"/>
    </location>
</feature>
<feature type="turn" evidence="16">
    <location>
        <begin position="1402"/>
        <end position="1405"/>
    </location>
</feature>
<feature type="strand" evidence="16">
    <location>
        <begin position="1406"/>
        <end position="1413"/>
    </location>
</feature>
<feature type="helix" evidence="16">
    <location>
        <begin position="1414"/>
        <end position="1417"/>
    </location>
</feature>
<feature type="helix" evidence="16">
    <location>
        <begin position="1423"/>
        <end position="1428"/>
    </location>
</feature>
<feature type="strand" evidence="16">
    <location>
        <begin position="1434"/>
        <end position="1438"/>
    </location>
</feature>
<feature type="helix" evidence="16">
    <location>
        <begin position="1440"/>
        <end position="1442"/>
    </location>
</feature>
<feature type="strand" evidence="16">
    <location>
        <begin position="1444"/>
        <end position="1446"/>
    </location>
</feature>
<feature type="strand" evidence="16">
    <location>
        <begin position="1461"/>
        <end position="1466"/>
    </location>
</feature>
<feature type="strand" evidence="16">
    <location>
        <begin position="1469"/>
        <end position="1474"/>
    </location>
</feature>
<keyword id="KW-0002">3D-structure</keyword>
<keyword id="KW-0067">ATP-binding</keyword>
<keyword id="KW-1003">Cell membrane</keyword>
<keyword id="KW-0175">Coiled coil</keyword>
<keyword id="KW-0472">Membrane</keyword>
<keyword id="KW-0547">Nucleotide-binding</keyword>
<keyword id="KW-0677">Repeat</keyword>
<keyword id="KW-0812">Transmembrane</keyword>
<keyword id="KW-1133">Transmembrane helix</keyword>
<keyword id="KW-0813">Transport</keyword>
<name>ECCC_GEOTN</name>
<proteinExistence type="evidence at protein level"/>
<gene>
    <name evidence="8" type="primary">eccC</name>
    <name evidence="9" type="synonym">essC</name>
    <name type="ordered locus">GTNG_0419</name>
</gene>
<protein>
    <recommendedName>
        <fullName evidence="8">ESX secretion system protein EccC</fullName>
    </recommendedName>
    <alternativeName>
        <fullName evidence="10">Type VII secretion system protein EccC</fullName>
        <shortName evidence="10">T7SS protein EccC</shortName>
    </alternativeName>
</protein>
<evidence type="ECO:0000250" key="1">
    <source>
        <dbReference type="UniProtKB" id="D1A4G7"/>
    </source>
</evidence>
<evidence type="ECO:0000250" key="2">
    <source>
        <dbReference type="UniProtKB" id="P9WNB1"/>
    </source>
</evidence>
<evidence type="ECO:0000250" key="3">
    <source>
        <dbReference type="UniProtKB" id="P9WNB3"/>
    </source>
</evidence>
<evidence type="ECO:0000255" key="4"/>
<evidence type="ECO:0000255" key="5">
    <source>
        <dbReference type="PROSITE-ProRule" id="PRU00289"/>
    </source>
</evidence>
<evidence type="ECO:0000269" key="6">
    <source>
    </source>
</evidence>
<evidence type="ECO:0000269" key="7">
    <source>
    </source>
</evidence>
<evidence type="ECO:0000303" key="8">
    <source>
    </source>
</evidence>
<evidence type="ECO:0000303" key="9">
    <source>
    </source>
</evidence>
<evidence type="ECO:0000305" key="10"/>
<evidence type="ECO:0000305" key="11">
    <source>
    </source>
</evidence>
<evidence type="ECO:0000305" key="12">
    <source>
    </source>
</evidence>
<evidence type="ECO:0007744" key="13">
    <source>
        <dbReference type="PDB" id="4LYA"/>
    </source>
</evidence>
<evidence type="ECO:0007744" key="14">
    <source>
        <dbReference type="PDB" id="5FV0"/>
    </source>
</evidence>
<evidence type="ECO:0007744" key="15">
    <source>
        <dbReference type="PDB" id="5FWH"/>
    </source>
</evidence>
<evidence type="ECO:0007829" key="16">
    <source>
        <dbReference type="PDB" id="4LYA"/>
    </source>
</evidence>
<evidence type="ECO:0007829" key="17">
    <source>
        <dbReference type="PDB" id="5FV0"/>
    </source>
</evidence>
<evidence type="ECO:0007829" key="18">
    <source>
        <dbReference type="PDB" id="5FWH"/>
    </source>
</evidence>
<dbReference type="EMBL" id="CP000557">
    <property type="protein sequence ID" value="ABO65801.1"/>
    <property type="molecule type" value="Genomic_DNA"/>
</dbReference>
<dbReference type="RefSeq" id="WP_011886773.1">
    <property type="nucleotide sequence ID" value="NC_009328.1"/>
</dbReference>
<dbReference type="PDB" id="4LYA">
    <property type="method" value="X-ray"/>
    <property type="resolution" value="2.45 A"/>
    <property type="chains" value="A=921-1479"/>
</dbReference>
<dbReference type="PDB" id="5FV0">
    <property type="method" value="X-ray"/>
    <property type="resolution" value="2.91 A"/>
    <property type="chains" value="A/B=966-1479"/>
</dbReference>
<dbReference type="PDB" id="5FWH">
    <property type="method" value="X-ray"/>
    <property type="resolution" value="2.06 A"/>
    <property type="chains" value="A=1-196"/>
</dbReference>
<dbReference type="PDBsum" id="4LYA"/>
<dbReference type="PDBsum" id="5FV0"/>
<dbReference type="PDBsum" id="5FWH"/>
<dbReference type="SMR" id="A4IKE7"/>
<dbReference type="GeneID" id="87621975"/>
<dbReference type="KEGG" id="gtn:GTNG_0419"/>
<dbReference type="eggNOG" id="COG1674">
    <property type="taxonomic scope" value="Bacteria"/>
</dbReference>
<dbReference type="HOGENOM" id="CLU_003134_2_1_9"/>
<dbReference type="BRENDA" id="7.4.2.8">
    <property type="organism ID" value="705"/>
</dbReference>
<dbReference type="EvolutionaryTrace" id="A4IKE7"/>
<dbReference type="Proteomes" id="UP000001578">
    <property type="component" value="Chromosome"/>
</dbReference>
<dbReference type="GO" id="GO:0005886">
    <property type="term" value="C:plasma membrane"/>
    <property type="evidence" value="ECO:0007669"/>
    <property type="project" value="UniProtKB-SubCell"/>
</dbReference>
<dbReference type="GO" id="GO:0005524">
    <property type="term" value="F:ATP binding"/>
    <property type="evidence" value="ECO:0007669"/>
    <property type="project" value="UniProtKB-KW"/>
</dbReference>
<dbReference type="GO" id="GO:0016887">
    <property type="term" value="F:ATP hydrolysis activity"/>
    <property type="evidence" value="ECO:0007669"/>
    <property type="project" value="InterPro"/>
</dbReference>
<dbReference type="GO" id="GO:0003677">
    <property type="term" value="F:DNA binding"/>
    <property type="evidence" value="ECO:0007669"/>
    <property type="project" value="InterPro"/>
</dbReference>
<dbReference type="Gene3D" id="3.40.50.300">
    <property type="entry name" value="P-loop containing nucleotide triphosphate hydrolases"/>
    <property type="match status" value="3"/>
</dbReference>
<dbReference type="InterPro" id="IPR003593">
    <property type="entry name" value="AAA+_ATPase"/>
</dbReference>
<dbReference type="InterPro" id="IPR023839">
    <property type="entry name" value="Firmicutes_EssC_C"/>
</dbReference>
<dbReference type="InterPro" id="IPR022206">
    <property type="entry name" value="Firmicutes_EssC_N"/>
</dbReference>
<dbReference type="InterPro" id="IPR050206">
    <property type="entry name" value="FtsK/SpoIIIE/SftA"/>
</dbReference>
<dbReference type="InterPro" id="IPR002543">
    <property type="entry name" value="FtsK_dom"/>
</dbReference>
<dbReference type="InterPro" id="IPR027417">
    <property type="entry name" value="P-loop_NTPase"/>
</dbReference>
<dbReference type="NCBIfam" id="TIGR03928">
    <property type="entry name" value="T7_EssCb_Firm"/>
    <property type="match status" value="1"/>
</dbReference>
<dbReference type="PANTHER" id="PTHR22683">
    <property type="entry name" value="SPORULATION PROTEIN RELATED"/>
    <property type="match status" value="1"/>
</dbReference>
<dbReference type="PANTHER" id="PTHR22683:SF1">
    <property type="entry name" value="TYPE VII SECRETION SYSTEM PROTEIN ESSC"/>
    <property type="match status" value="1"/>
</dbReference>
<dbReference type="Pfam" id="PF01580">
    <property type="entry name" value="FtsK_SpoIIIE"/>
    <property type="match status" value="2"/>
</dbReference>
<dbReference type="Pfam" id="PF12538">
    <property type="entry name" value="FtsK_SpoIIIE_N"/>
    <property type="match status" value="1"/>
</dbReference>
<dbReference type="SMART" id="SM00382">
    <property type="entry name" value="AAA"/>
    <property type="match status" value="3"/>
</dbReference>
<dbReference type="SUPFAM" id="SSF52540">
    <property type="entry name" value="P-loop containing nucleoside triphosphate hydrolases"/>
    <property type="match status" value="3"/>
</dbReference>
<dbReference type="PROSITE" id="PS50901">
    <property type="entry name" value="FTSK"/>
    <property type="match status" value="2"/>
</dbReference>
<accession>A4IKE7</accession>